<keyword id="KW-0150">Chloroplast</keyword>
<keyword id="KW-0240">DNA-directed RNA polymerase</keyword>
<keyword id="KW-0548">Nucleotidyltransferase</keyword>
<keyword id="KW-0934">Plastid</keyword>
<keyword id="KW-0804">Transcription</keyword>
<keyword id="KW-0808">Transferase</keyword>
<accession>A4QJJ1</accession>
<name>RPOB_AETGR</name>
<protein>
    <recommendedName>
        <fullName evidence="1">DNA-directed RNA polymerase subunit beta</fullName>
        <ecNumber evidence="1">2.7.7.6</ecNumber>
    </recommendedName>
    <alternativeName>
        <fullName evidence="1">PEP</fullName>
    </alternativeName>
    <alternativeName>
        <fullName evidence="1">Plastid-encoded RNA polymerase subunit beta</fullName>
        <shortName evidence="1">RNA polymerase subunit beta</shortName>
    </alternativeName>
</protein>
<evidence type="ECO:0000255" key="1">
    <source>
        <dbReference type="HAMAP-Rule" id="MF_01321"/>
    </source>
</evidence>
<geneLocation type="chloroplast"/>
<reference key="1">
    <citation type="submission" date="2007-03" db="EMBL/GenBank/DDBJ databases">
        <title>Sequencing analysis of Aethionema grandiflorum chloroplast DNA.</title>
        <authorList>
            <person name="Hosouchi T."/>
            <person name="Tsuruoka H."/>
            <person name="Kotani H."/>
        </authorList>
    </citation>
    <scope>NUCLEOTIDE SEQUENCE [LARGE SCALE GENOMIC DNA]</scope>
</reference>
<proteinExistence type="inferred from homology"/>
<comment type="function">
    <text evidence="1">DNA-dependent RNA polymerase catalyzes the transcription of DNA into RNA using the four ribonucleoside triphosphates as substrates.</text>
</comment>
<comment type="catalytic activity">
    <reaction evidence="1">
        <text>RNA(n) + a ribonucleoside 5'-triphosphate = RNA(n+1) + diphosphate</text>
        <dbReference type="Rhea" id="RHEA:21248"/>
        <dbReference type="Rhea" id="RHEA-COMP:14527"/>
        <dbReference type="Rhea" id="RHEA-COMP:17342"/>
        <dbReference type="ChEBI" id="CHEBI:33019"/>
        <dbReference type="ChEBI" id="CHEBI:61557"/>
        <dbReference type="ChEBI" id="CHEBI:140395"/>
        <dbReference type="EC" id="2.7.7.6"/>
    </reaction>
</comment>
<comment type="subunit">
    <text evidence="1">In plastids the minimal PEP RNA polymerase catalytic core is composed of four subunits: alpha, beta, beta', and beta''. When a (nuclear-encoded) sigma factor is associated with the core the holoenzyme is formed, which can initiate transcription.</text>
</comment>
<comment type="subcellular location">
    <subcellularLocation>
        <location>Plastid</location>
        <location>Chloroplast</location>
    </subcellularLocation>
</comment>
<comment type="similarity">
    <text evidence="1">Belongs to the RNA polymerase beta chain family.</text>
</comment>
<sequence length="1073" mass="120945">MLGDGKEGTSTIPGFNQIQFEGFYRFIDQGLIEEVSKFPKIEDIDQEIEFQLFVETYQLVEPLRKERDAVYESLTYSSELYVSAGLIWKTSRKMQEQRIFIGNIPLMNSLGTSIVNGIYRIVINQILQSPGIYYQSELDHNGISVYTGTIISDWGGRLELEIDKKARIWARVSRKQKISILVLSSAMGSNLREILENVCYPEIFLSFLTDKEKKKIGSKENAILEFYQQFSCVGGDPIFSESLCKELQKKFFHQRCELGRIGRRNINWRLNLTIPQNNIFLLPRDILAAADHLIGMKFGMGTLDDMNHLKNKRIRSVADLLQDQFGLALARLENVVKGTICGAIKHKLIPTPQNLVTATPLTTTYESFFGLHPLSQVLDRTNPLTQIVHGRKLSYLGPGGLTGRTANFRIRDIHPSHYGRICPIDTSEGINVGLIGSLAIHARIGDWGSLESPFYELFEKSKKARIRMLFLSPSQDEYYMIAAGNSLALNRGIQEEQAVPARYRQEFLTIAWEEVHLRSIFPFQYFSIGASLIPFIEHNDANRALMSSNMQRQAVPLSRSEKCIVGTGLERQVALDSGVPAIAEQEGKILYTDTKKIILSGNGDNTLGIPLIMYQRSNKNTCMHQKSQVRRGKCIKKGQILADGAATVGGELALGKNILVAYMPWEGYNFEDAVLISECLVYGDIYTSFHIRKYEIQTHVTTQGPERITKEIPHLEGHLLRNLDKNGIVMLGSWVETGDILVGKLTPQVAKESSYAPEDRLLRAILGIQVSTSKETCLKLPIGGRGRVIDVGWVQKKGGSSYNPEKIRVYISQKREIKVGDKVAGRHGNKGIISKILPRQDMPYLQDGRPVDMVFNPLGVPSRMNVGQIFECSLGLAGSLLDRHYRIAPFDERYEQEASRKLVFSELYEASKQTANPWVFEPEYPGKSRIFDGRTGDPFEQPVIIGKPYILKLIHQVDDKIHGRSSGHYALVTQQPLRGRSKQGGQRVGEMEVWALEGFGVAHILQEMLTYKSDHIRARQEVLGTTIVGGTIPKPEDAPESFRLLVRELRSLALDLNHFLVSEKNFQINRKEV</sequence>
<feature type="chain" id="PRO_0000300430" description="DNA-directed RNA polymerase subunit beta">
    <location>
        <begin position="1"/>
        <end position="1073"/>
    </location>
</feature>
<organism>
    <name type="scientific">Aethionema grandiflorum</name>
    <name type="common">Persian stone-cress</name>
    <dbReference type="NCBI Taxonomy" id="72657"/>
    <lineage>
        <taxon>Eukaryota</taxon>
        <taxon>Viridiplantae</taxon>
        <taxon>Streptophyta</taxon>
        <taxon>Embryophyta</taxon>
        <taxon>Tracheophyta</taxon>
        <taxon>Spermatophyta</taxon>
        <taxon>Magnoliopsida</taxon>
        <taxon>eudicotyledons</taxon>
        <taxon>Gunneridae</taxon>
        <taxon>Pentapetalae</taxon>
        <taxon>rosids</taxon>
        <taxon>malvids</taxon>
        <taxon>Brassicales</taxon>
        <taxon>Brassicaceae</taxon>
        <taxon>Aethionemeae</taxon>
        <taxon>Aethionema</taxon>
    </lineage>
</organism>
<dbReference type="EC" id="2.7.7.6" evidence="1"/>
<dbReference type="EMBL" id="AP009367">
    <property type="protein sequence ID" value="BAF49846.1"/>
    <property type="molecule type" value="Genomic_DNA"/>
</dbReference>
<dbReference type="RefSeq" id="YP_001123022.1">
    <property type="nucleotide sequence ID" value="NC_009266.1"/>
</dbReference>
<dbReference type="SMR" id="A4QJJ1"/>
<dbReference type="GeneID" id="4962267"/>
<dbReference type="GO" id="GO:0009507">
    <property type="term" value="C:chloroplast"/>
    <property type="evidence" value="ECO:0007669"/>
    <property type="project" value="UniProtKB-SubCell"/>
</dbReference>
<dbReference type="GO" id="GO:0000428">
    <property type="term" value="C:DNA-directed RNA polymerase complex"/>
    <property type="evidence" value="ECO:0007669"/>
    <property type="project" value="UniProtKB-KW"/>
</dbReference>
<dbReference type="GO" id="GO:0005739">
    <property type="term" value="C:mitochondrion"/>
    <property type="evidence" value="ECO:0007669"/>
    <property type="project" value="GOC"/>
</dbReference>
<dbReference type="GO" id="GO:0003677">
    <property type="term" value="F:DNA binding"/>
    <property type="evidence" value="ECO:0007669"/>
    <property type="project" value="UniProtKB-UniRule"/>
</dbReference>
<dbReference type="GO" id="GO:0003899">
    <property type="term" value="F:DNA-directed RNA polymerase activity"/>
    <property type="evidence" value="ECO:0007669"/>
    <property type="project" value="UniProtKB-UniRule"/>
</dbReference>
<dbReference type="GO" id="GO:0032549">
    <property type="term" value="F:ribonucleoside binding"/>
    <property type="evidence" value="ECO:0007669"/>
    <property type="project" value="InterPro"/>
</dbReference>
<dbReference type="GO" id="GO:0006351">
    <property type="term" value="P:DNA-templated transcription"/>
    <property type="evidence" value="ECO:0007669"/>
    <property type="project" value="UniProtKB-UniRule"/>
</dbReference>
<dbReference type="CDD" id="cd00653">
    <property type="entry name" value="RNA_pol_B_RPB2"/>
    <property type="match status" value="1"/>
</dbReference>
<dbReference type="FunFam" id="3.90.1110.10:FF:000009">
    <property type="entry name" value="DNA-directed RNA polymerase subunit beta"/>
    <property type="match status" value="1"/>
</dbReference>
<dbReference type="Gene3D" id="2.40.50.100">
    <property type="match status" value="1"/>
</dbReference>
<dbReference type="Gene3D" id="2.40.50.150">
    <property type="match status" value="1"/>
</dbReference>
<dbReference type="Gene3D" id="3.90.1100.10">
    <property type="match status" value="1"/>
</dbReference>
<dbReference type="Gene3D" id="2.30.150.10">
    <property type="entry name" value="DNA-directed RNA polymerase, beta subunit, external 1 domain"/>
    <property type="match status" value="1"/>
</dbReference>
<dbReference type="Gene3D" id="2.40.270.10">
    <property type="entry name" value="DNA-directed RNA polymerase, subunit 2, domain 6"/>
    <property type="match status" value="2"/>
</dbReference>
<dbReference type="Gene3D" id="3.90.1800.10">
    <property type="entry name" value="RNA polymerase alpha subunit dimerisation domain"/>
    <property type="match status" value="1"/>
</dbReference>
<dbReference type="Gene3D" id="3.90.1110.10">
    <property type="entry name" value="RNA polymerase Rpb2, domain 2"/>
    <property type="match status" value="1"/>
</dbReference>
<dbReference type="HAMAP" id="MF_01321">
    <property type="entry name" value="RNApol_bact_RpoB"/>
    <property type="match status" value="1"/>
</dbReference>
<dbReference type="InterPro" id="IPR042107">
    <property type="entry name" value="DNA-dir_RNA_pol_bsu_ext_1_sf"/>
</dbReference>
<dbReference type="InterPro" id="IPR015712">
    <property type="entry name" value="DNA-dir_RNA_pol_su2"/>
</dbReference>
<dbReference type="InterPro" id="IPR007120">
    <property type="entry name" value="DNA-dir_RNAP_su2_dom"/>
</dbReference>
<dbReference type="InterPro" id="IPR037033">
    <property type="entry name" value="DNA-dir_RNAP_su2_hyb_sf"/>
</dbReference>
<dbReference type="InterPro" id="IPR010243">
    <property type="entry name" value="RNA_pol_bsu_bac"/>
</dbReference>
<dbReference type="InterPro" id="IPR007121">
    <property type="entry name" value="RNA_pol_bsu_CS"/>
</dbReference>
<dbReference type="InterPro" id="IPR007642">
    <property type="entry name" value="RNA_pol_Rpb2_2"/>
</dbReference>
<dbReference type="InterPro" id="IPR037034">
    <property type="entry name" value="RNA_pol_Rpb2_2_sf"/>
</dbReference>
<dbReference type="InterPro" id="IPR007645">
    <property type="entry name" value="RNA_pol_Rpb2_3"/>
</dbReference>
<dbReference type="InterPro" id="IPR007641">
    <property type="entry name" value="RNA_pol_Rpb2_7"/>
</dbReference>
<dbReference type="InterPro" id="IPR014724">
    <property type="entry name" value="RNA_pol_RPB2_OB-fold"/>
</dbReference>
<dbReference type="NCBIfam" id="NF001616">
    <property type="entry name" value="PRK00405.1"/>
    <property type="match status" value="1"/>
</dbReference>
<dbReference type="PANTHER" id="PTHR20856">
    <property type="entry name" value="DNA-DIRECTED RNA POLYMERASE I SUBUNIT 2"/>
    <property type="match status" value="1"/>
</dbReference>
<dbReference type="Pfam" id="PF04561">
    <property type="entry name" value="RNA_pol_Rpb2_2"/>
    <property type="match status" value="1"/>
</dbReference>
<dbReference type="Pfam" id="PF04565">
    <property type="entry name" value="RNA_pol_Rpb2_3"/>
    <property type="match status" value="1"/>
</dbReference>
<dbReference type="Pfam" id="PF00562">
    <property type="entry name" value="RNA_pol_Rpb2_6"/>
    <property type="match status" value="1"/>
</dbReference>
<dbReference type="Pfam" id="PF04560">
    <property type="entry name" value="RNA_pol_Rpb2_7"/>
    <property type="match status" value="1"/>
</dbReference>
<dbReference type="SUPFAM" id="SSF64484">
    <property type="entry name" value="beta and beta-prime subunits of DNA dependent RNA-polymerase"/>
    <property type="match status" value="1"/>
</dbReference>
<dbReference type="PROSITE" id="PS01166">
    <property type="entry name" value="RNA_POL_BETA"/>
    <property type="match status" value="1"/>
</dbReference>
<gene>
    <name evidence="1" type="primary">rpoB</name>
</gene>